<reference key="1">
    <citation type="journal article" date="2008" name="J. Bacteriol.">
        <title>The complete genome sequence of Escherichia coli DH10B: insights into the biology of a laboratory workhorse.</title>
        <authorList>
            <person name="Durfee T."/>
            <person name="Nelson R."/>
            <person name="Baldwin S."/>
            <person name="Plunkett G. III"/>
            <person name="Burland V."/>
            <person name="Mau B."/>
            <person name="Petrosino J.F."/>
            <person name="Qin X."/>
            <person name="Muzny D.M."/>
            <person name="Ayele M."/>
            <person name="Gibbs R.A."/>
            <person name="Csorgo B."/>
            <person name="Posfai G."/>
            <person name="Weinstock G.M."/>
            <person name="Blattner F.R."/>
        </authorList>
    </citation>
    <scope>NUCLEOTIDE SEQUENCE [LARGE SCALE GENOMIC DNA]</scope>
    <source>
        <strain>K12 / DH10B</strain>
    </source>
</reference>
<evidence type="ECO:0000255" key="1">
    <source>
        <dbReference type="HAMAP-Rule" id="MF_00068"/>
    </source>
</evidence>
<proteinExistence type="inferred from homology"/>
<organism>
    <name type="scientific">Escherichia coli (strain K12 / DH10B)</name>
    <dbReference type="NCBI Taxonomy" id="316385"/>
    <lineage>
        <taxon>Bacteria</taxon>
        <taxon>Pseudomonadati</taxon>
        <taxon>Pseudomonadota</taxon>
        <taxon>Gammaproteobacteria</taxon>
        <taxon>Enterobacterales</taxon>
        <taxon>Enterobacteriaceae</taxon>
        <taxon>Escherichia</taxon>
    </lineage>
</organism>
<dbReference type="EC" id="4.2.1.126" evidence="1"/>
<dbReference type="EMBL" id="CP000948">
    <property type="protein sequence ID" value="ACB03579.1"/>
    <property type="molecule type" value="Genomic_DNA"/>
</dbReference>
<dbReference type="RefSeq" id="WP_001159160.1">
    <property type="nucleotide sequence ID" value="NC_010473.1"/>
</dbReference>
<dbReference type="SMR" id="B1XA99"/>
<dbReference type="KEGG" id="ecd:ECDH10B_2593"/>
<dbReference type="HOGENOM" id="CLU_049049_1_1_6"/>
<dbReference type="UniPathway" id="UPA00342"/>
<dbReference type="UniPathway" id="UPA00343"/>
<dbReference type="UniPathway" id="UPA00544"/>
<dbReference type="GO" id="GO:0097367">
    <property type="term" value="F:carbohydrate derivative binding"/>
    <property type="evidence" value="ECO:0007669"/>
    <property type="project" value="InterPro"/>
</dbReference>
<dbReference type="GO" id="GO:0016835">
    <property type="term" value="F:carbon-oxygen lyase activity"/>
    <property type="evidence" value="ECO:0007669"/>
    <property type="project" value="UniProtKB-UniRule"/>
</dbReference>
<dbReference type="GO" id="GO:0016803">
    <property type="term" value="F:ether hydrolase activity"/>
    <property type="evidence" value="ECO:0007669"/>
    <property type="project" value="TreeGrafter"/>
</dbReference>
<dbReference type="GO" id="GO:0097175">
    <property type="term" value="P:1,6-anhydro-N-acetyl-beta-muramic acid catabolic process"/>
    <property type="evidence" value="ECO:0007669"/>
    <property type="project" value="UniProtKB-UniRule"/>
</dbReference>
<dbReference type="GO" id="GO:0046348">
    <property type="term" value="P:amino sugar catabolic process"/>
    <property type="evidence" value="ECO:0007669"/>
    <property type="project" value="InterPro"/>
</dbReference>
<dbReference type="GO" id="GO:0097173">
    <property type="term" value="P:N-acetylmuramic acid catabolic process"/>
    <property type="evidence" value="ECO:0007669"/>
    <property type="project" value="UniProtKB-UniPathway"/>
</dbReference>
<dbReference type="GO" id="GO:0009254">
    <property type="term" value="P:peptidoglycan turnover"/>
    <property type="evidence" value="ECO:0007669"/>
    <property type="project" value="UniProtKB-UniRule"/>
</dbReference>
<dbReference type="CDD" id="cd05007">
    <property type="entry name" value="SIS_Etherase"/>
    <property type="match status" value="1"/>
</dbReference>
<dbReference type="FunFam" id="1.10.8.1080:FF:000001">
    <property type="entry name" value="N-acetylmuramic acid 6-phosphate etherase"/>
    <property type="match status" value="1"/>
</dbReference>
<dbReference type="FunFam" id="3.40.50.10490:FF:000014">
    <property type="entry name" value="N-acetylmuramic acid 6-phosphate etherase"/>
    <property type="match status" value="1"/>
</dbReference>
<dbReference type="Gene3D" id="1.10.8.1080">
    <property type="match status" value="1"/>
</dbReference>
<dbReference type="Gene3D" id="3.40.50.10490">
    <property type="entry name" value="Glucose-6-phosphate isomerase like protein, domain 1"/>
    <property type="match status" value="1"/>
</dbReference>
<dbReference type="HAMAP" id="MF_00068">
    <property type="entry name" value="MurQ"/>
    <property type="match status" value="1"/>
</dbReference>
<dbReference type="InterPro" id="IPR005488">
    <property type="entry name" value="Etherase_MurQ"/>
</dbReference>
<dbReference type="InterPro" id="IPR005486">
    <property type="entry name" value="Glucokinase_regulatory_CS"/>
</dbReference>
<dbReference type="InterPro" id="IPR040190">
    <property type="entry name" value="MURQ/GCKR"/>
</dbReference>
<dbReference type="InterPro" id="IPR001347">
    <property type="entry name" value="SIS_dom"/>
</dbReference>
<dbReference type="InterPro" id="IPR046348">
    <property type="entry name" value="SIS_dom_sf"/>
</dbReference>
<dbReference type="NCBIfam" id="TIGR00274">
    <property type="entry name" value="N-acetylmuramic acid 6-phosphate etherase"/>
    <property type="match status" value="1"/>
</dbReference>
<dbReference type="NCBIfam" id="NF003915">
    <property type="entry name" value="PRK05441.1"/>
    <property type="match status" value="1"/>
</dbReference>
<dbReference type="NCBIfam" id="NF009222">
    <property type="entry name" value="PRK12570.1"/>
    <property type="match status" value="1"/>
</dbReference>
<dbReference type="PANTHER" id="PTHR10088">
    <property type="entry name" value="GLUCOKINASE REGULATORY PROTEIN"/>
    <property type="match status" value="1"/>
</dbReference>
<dbReference type="PANTHER" id="PTHR10088:SF4">
    <property type="entry name" value="GLUCOKINASE REGULATORY PROTEIN"/>
    <property type="match status" value="1"/>
</dbReference>
<dbReference type="Pfam" id="PF20741">
    <property type="entry name" value="GKRP-like_C"/>
    <property type="match status" value="1"/>
</dbReference>
<dbReference type="Pfam" id="PF22645">
    <property type="entry name" value="GKRP_SIS_N"/>
    <property type="match status" value="1"/>
</dbReference>
<dbReference type="SUPFAM" id="SSF53697">
    <property type="entry name" value="SIS domain"/>
    <property type="match status" value="1"/>
</dbReference>
<dbReference type="PROSITE" id="PS01272">
    <property type="entry name" value="GCKR"/>
    <property type="match status" value="1"/>
</dbReference>
<dbReference type="PROSITE" id="PS51464">
    <property type="entry name" value="SIS"/>
    <property type="match status" value="1"/>
</dbReference>
<keyword id="KW-0119">Carbohydrate metabolism</keyword>
<keyword id="KW-0456">Lyase</keyword>
<name>MURQ_ECODH</name>
<accession>B1XA99</accession>
<comment type="function">
    <text evidence="1">Specifically catalyzes the cleavage of the D-lactyl ether substituent of MurNAc 6-phosphate, producing GlcNAc 6-phosphate and D-lactate. Together with AnmK, is also required for the utilization of anhydro-N-acetylmuramic acid (anhMurNAc) either imported from the medium or derived from its own cell wall murein, and thus plays a role in cell wall recycling.</text>
</comment>
<comment type="catalytic activity">
    <reaction evidence="1">
        <text>N-acetyl-D-muramate 6-phosphate + H2O = N-acetyl-D-glucosamine 6-phosphate + (R)-lactate</text>
        <dbReference type="Rhea" id="RHEA:26410"/>
        <dbReference type="ChEBI" id="CHEBI:15377"/>
        <dbReference type="ChEBI" id="CHEBI:16004"/>
        <dbReference type="ChEBI" id="CHEBI:57513"/>
        <dbReference type="ChEBI" id="CHEBI:58722"/>
        <dbReference type="EC" id="4.2.1.126"/>
    </reaction>
</comment>
<comment type="pathway">
    <text evidence="1">Amino-sugar metabolism; 1,6-anhydro-N-acetylmuramate degradation.</text>
</comment>
<comment type="pathway">
    <text evidence="1">Amino-sugar metabolism; N-acetylmuramate degradation.</text>
</comment>
<comment type="pathway">
    <text evidence="1">Cell wall biogenesis; peptidoglycan recycling.</text>
</comment>
<comment type="subunit">
    <text evidence="1">Homodimer.</text>
</comment>
<comment type="induction">
    <text evidence="1">Induced by MurNAc 6-phosphate that releases the repressor MurR from the DNA. Repressed by MurR in the absence of MurNAc 6-phosphate.</text>
</comment>
<comment type="miscellaneous">
    <text evidence="1">A lyase-type mechanism (elimination/hydration) is suggested for the cleavage of the lactyl ether bond of MurNAc 6-phosphate, with the formation of an alpha,beta-unsaturated aldehyde intermediate with (E)-stereochemistry, followed by the syn addition of water to give product.</text>
</comment>
<comment type="similarity">
    <text evidence="1">Belongs to the GCKR-like family. MurNAc-6-P etherase subfamily.</text>
</comment>
<feature type="chain" id="PRO_1000092306" description="N-acetylmuramic acid 6-phosphate etherase">
    <location>
        <begin position="1"/>
        <end position="298"/>
    </location>
</feature>
<feature type="domain" description="SIS" evidence="1">
    <location>
        <begin position="55"/>
        <end position="218"/>
    </location>
</feature>
<feature type="active site" description="Proton donor" evidence="1">
    <location>
        <position position="83"/>
    </location>
</feature>
<feature type="active site" evidence="1">
    <location>
        <position position="114"/>
    </location>
</feature>
<sequence length="298" mass="31220">MQFEKMITEGSNTASAEIDRVSTLEMCRIINDEDKTVPLAVERVLPDIAAAIDVIHAQVSGGGRLIYLGAGTSGRLGILDASECPPTYGVKPGLVVGLIAGGEYAIQHAVEGAEDSREGGVNDLKNINLTAQDVVVGIAASGRTPYVIAGLEYARQLGCRTVGISCNPGSAVSTTAEFAITPIVGAEVVTGSSRMKAGTAQKLVLNMLSTGLMIKSGKVFGNLMVDVVATNEKLHVRQVNIVKNATGCSAEQAEAALIACERNCKTAIVMVLKNLDAAEAKKRLDQHGGFIRQVLDKE</sequence>
<gene>
    <name evidence="1" type="primary">murQ</name>
    <name type="ordered locus">ECDH10B_2593</name>
</gene>
<protein>
    <recommendedName>
        <fullName evidence="1">N-acetylmuramic acid 6-phosphate etherase</fullName>
        <shortName evidence="1">MurNAc-6-P etherase</shortName>
        <ecNumber evidence="1">4.2.1.126</ecNumber>
    </recommendedName>
    <alternativeName>
        <fullName evidence="1">N-acetylmuramic acid 6-phosphate hydrolase</fullName>
    </alternativeName>
    <alternativeName>
        <fullName evidence="1">N-acetylmuramic acid 6-phosphate lyase</fullName>
    </alternativeName>
</protein>